<protein>
    <recommendedName>
        <fullName evidence="1">Orotate phosphoribosyltransferase</fullName>
        <shortName evidence="1">OPRT</shortName>
        <shortName evidence="1">OPRTase</shortName>
        <ecNumber evidence="1">2.4.2.10</ecNumber>
    </recommendedName>
</protein>
<keyword id="KW-0328">Glycosyltransferase</keyword>
<keyword id="KW-0460">Magnesium</keyword>
<keyword id="KW-0665">Pyrimidine biosynthesis</keyword>
<keyword id="KW-0808">Transferase</keyword>
<dbReference type="EC" id="2.4.2.10" evidence="1"/>
<dbReference type="EMBL" id="CR626927">
    <property type="protein sequence ID" value="CAH06216.1"/>
    <property type="molecule type" value="Genomic_DNA"/>
</dbReference>
<dbReference type="RefSeq" id="WP_005784381.1">
    <property type="nucleotide sequence ID" value="NZ_UFTH01000001.1"/>
</dbReference>
<dbReference type="SMR" id="Q5LI12"/>
<dbReference type="PaxDb" id="272559-BF9343_0437"/>
<dbReference type="GeneID" id="60366093"/>
<dbReference type="KEGG" id="bfs:BF9343_0437"/>
<dbReference type="eggNOG" id="COG0461">
    <property type="taxonomic scope" value="Bacteria"/>
</dbReference>
<dbReference type="HOGENOM" id="CLU_074878_1_1_10"/>
<dbReference type="UniPathway" id="UPA00070">
    <property type="reaction ID" value="UER00119"/>
</dbReference>
<dbReference type="Proteomes" id="UP000006731">
    <property type="component" value="Chromosome"/>
</dbReference>
<dbReference type="GO" id="GO:0000287">
    <property type="term" value="F:magnesium ion binding"/>
    <property type="evidence" value="ECO:0007669"/>
    <property type="project" value="UniProtKB-UniRule"/>
</dbReference>
<dbReference type="GO" id="GO:0004588">
    <property type="term" value="F:orotate phosphoribosyltransferase activity"/>
    <property type="evidence" value="ECO:0007669"/>
    <property type="project" value="UniProtKB-UniRule"/>
</dbReference>
<dbReference type="GO" id="GO:0044205">
    <property type="term" value="P:'de novo' UMP biosynthetic process"/>
    <property type="evidence" value="ECO:0007669"/>
    <property type="project" value="UniProtKB-UniRule"/>
</dbReference>
<dbReference type="GO" id="GO:0019856">
    <property type="term" value="P:pyrimidine nucleobase biosynthetic process"/>
    <property type="evidence" value="ECO:0007669"/>
    <property type="project" value="TreeGrafter"/>
</dbReference>
<dbReference type="CDD" id="cd06223">
    <property type="entry name" value="PRTases_typeI"/>
    <property type="match status" value="1"/>
</dbReference>
<dbReference type="Gene3D" id="3.40.50.2020">
    <property type="match status" value="1"/>
</dbReference>
<dbReference type="HAMAP" id="MF_01208">
    <property type="entry name" value="PyrE"/>
    <property type="match status" value="1"/>
</dbReference>
<dbReference type="InterPro" id="IPR023031">
    <property type="entry name" value="OPRT"/>
</dbReference>
<dbReference type="InterPro" id="IPR004467">
    <property type="entry name" value="Or_phspho_trans_dom"/>
</dbReference>
<dbReference type="InterPro" id="IPR000836">
    <property type="entry name" value="PRibTrfase_dom"/>
</dbReference>
<dbReference type="InterPro" id="IPR029057">
    <property type="entry name" value="PRTase-like"/>
</dbReference>
<dbReference type="NCBIfam" id="TIGR00336">
    <property type="entry name" value="pyrE"/>
    <property type="match status" value="1"/>
</dbReference>
<dbReference type="PANTHER" id="PTHR19278">
    <property type="entry name" value="OROTATE PHOSPHORIBOSYLTRANSFERASE"/>
    <property type="match status" value="1"/>
</dbReference>
<dbReference type="PANTHER" id="PTHR19278:SF9">
    <property type="entry name" value="URIDINE 5'-MONOPHOSPHATE SYNTHASE"/>
    <property type="match status" value="1"/>
</dbReference>
<dbReference type="Pfam" id="PF00156">
    <property type="entry name" value="Pribosyltran"/>
    <property type="match status" value="1"/>
</dbReference>
<dbReference type="SUPFAM" id="SSF53271">
    <property type="entry name" value="PRTase-like"/>
    <property type="match status" value="1"/>
</dbReference>
<dbReference type="PROSITE" id="PS00103">
    <property type="entry name" value="PUR_PYR_PR_TRANSFER"/>
    <property type="match status" value="1"/>
</dbReference>
<feature type="chain" id="PRO_1000066202" description="Orotate phosphoribosyltransferase">
    <location>
        <begin position="1"/>
        <end position="212"/>
    </location>
</feature>
<feature type="binding site" evidence="1">
    <location>
        <position position="97"/>
    </location>
    <ligand>
        <name>5-phospho-alpha-D-ribose 1-diphosphate</name>
        <dbReference type="ChEBI" id="CHEBI:58017"/>
        <note>ligand shared between dimeric partners</note>
    </ligand>
</feature>
<feature type="binding site" evidence="1">
    <location>
        <position position="101"/>
    </location>
    <ligand>
        <name>5-phospho-alpha-D-ribose 1-diphosphate</name>
        <dbReference type="ChEBI" id="CHEBI:58017"/>
        <note>ligand shared between dimeric partners</note>
    </ligand>
</feature>
<feature type="binding site" evidence="1">
    <location>
        <position position="103"/>
    </location>
    <ligand>
        <name>5-phospho-alpha-D-ribose 1-diphosphate</name>
        <dbReference type="ChEBI" id="CHEBI:58017"/>
        <note>ligand shared between dimeric partners</note>
    </ligand>
</feature>
<feature type="binding site" description="in other chain" evidence="1">
    <location>
        <begin position="123"/>
        <end position="131"/>
    </location>
    <ligand>
        <name>5-phospho-alpha-D-ribose 1-diphosphate</name>
        <dbReference type="ChEBI" id="CHEBI:58017"/>
        <note>ligand shared between dimeric partners</note>
    </ligand>
</feature>
<feature type="binding site" evidence="1">
    <location>
        <position position="127"/>
    </location>
    <ligand>
        <name>orotate</name>
        <dbReference type="ChEBI" id="CHEBI:30839"/>
    </ligand>
</feature>
<sequence length="212" mass="23504">MKNLERLFAEKLLKIKAIKLQPANPFTWASGWKSPFYCDNRKTLSYPSLRSFVKFEITRLVLERFGQVDAIAGVATGAIPQGALVADALNLPFVYVRSTPKDHGLENLIEGELRPGMKVVVVEDLISTGGSSLKAVEAIRRDGCEVIGMVAAYTYGFPVAEQAFKDAKVPLVTLTNYEAVLDVALRTGYIEEEDIATLNEWRKDPAHWETGK</sequence>
<evidence type="ECO:0000255" key="1">
    <source>
        <dbReference type="HAMAP-Rule" id="MF_01208"/>
    </source>
</evidence>
<accession>Q5LI12</accession>
<proteinExistence type="inferred from homology"/>
<organism>
    <name type="scientific">Bacteroides fragilis (strain ATCC 25285 / DSM 2151 / CCUG 4856 / JCM 11019 / LMG 10263 / NCTC 9343 / Onslow / VPI 2553 / EN-2)</name>
    <dbReference type="NCBI Taxonomy" id="272559"/>
    <lineage>
        <taxon>Bacteria</taxon>
        <taxon>Pseudomonadati</taxon>
        <taxon>Bacteroidota</taxon>
        <taxon>Bacteroidia</taxon>
        <taxon>Bacteroidales</taxon>
        <taxon>Bacteroidaceae</taxon>
        <taxon>Bacteroides</taxon>
    </lineage>
</organism>
<gene>
    <name evidence="1" type="primary">pyrE</name>
    <name type="ordered locus">BF0455</name>
</gene>
<comment type="function">
    <text evidence="1">Catalyzes the transfer of a ribosyl phosphate group from 5-phosphoribose 1-diphosphate to orotate, leading to the formation of orotidine monophosphate (OMP).</text>
</comment>
<comment type="catalytic activity">
    <reaction evidence="1">
        <text>orotidine 5'-phosphate + diphosphate = orotate + 5-phospho-alpha-D-ribose 1-diphosphate</text>
        <dbReference type="Rhea" id="RHEA:10380"/>
        <dbReference type="ChEBI" id="CHEBI:30839"/>
        <dbReference type="ChEBI" id="CHEBI:33019"/>
        <dbReference type="ChEBI" id="CHEBI:57538"/>
        <dbReference type="ChEBI" id="CHEBI:58017"/>
        <dbReference type="EC" id="2.4.2.10"/>
    </reaction>
</comment>
<comment type="cofactor">
    <cofactor evidence="1">
        <name>Mg(2+)</name>
        <dbReference type="ChEBI" id="CHEBI:18420"/>
    </cofactor>
</comment>
<comment type="pathway">
    <text evidence="1">Pyrimidine metabolism; UMP biosynthesis via de novo pathway; UMP from orotate: step 1/2.</text>
</comment>
<comment type="subunit">
    <text evidence="1">Homodimer.</text>
</comment>
<comment type="similarity">
    <text evidence="1">Belongs to the purine/pyrimidine phosphoribosyltransferase family. PyrE subfamily.</text>
</comment>
<name>PYRE_BACFN</name>
<reference key="1">
    <citation type="journal article" date="2005" name="Science">
        <title>Extensive DNA inversions in the B. fragilis genome control variable gene expression.</title>
        <authorList>
            <person name="Cerdeno-Tarraga A.-M."/>
            <person name="Patrick S."/>
            <person name="Crossman L.C."/>
            <person name="Blakely G."/>
            <person name="Abratt V."/>
            <person name="Lennard N."/>
            <person name="Poxton I."/>
            <person name="Duerden B."/>
            <person name="Harris B."/>
            <person name="Quail M.A."/>
            <person name="Barron A."/>
            <person name="Clark L."/>
            <person name="Corton C."/>
            <person name="Doggett J."/>
            <person name="Holden M.T.G."/>
            <person name="Larke N."/>
            <person name="Line A."/>
            <person name="Lord A."/>
            <person name="Norbertczak H."/>
            <person name="Ormond D."/>
            <person name="Price C."/>
            <person name="Rabbinowitsch E."/>
            <person name="Woodward J."/>
            <person name="Barrell B.G."/>
            <person name="Parkhill J."/>
        </authorList>
    </citation>
    <scope>NUCLEOTIDE SEQUENCE [LARGE SCALE GENOMIC DNA]</scope>
    <source>
        <strain>ATCC 25285 / DSM 2151 / CCUG 4856 / JCM 11019 / LMG 10263 / NCTC 9343 / Onslow / VPI 2553 / EN-2</strain>
    </source>
</reference>